<comment type="function">
    <text evidence="1">Uptake of Fe(2+) ions across the membrane.</text>
</comment>
<comment type="subunit">
    <text evidence="1">Part of a ferrous iron transporter composed of EfeU, EfeO and EfeB.</text>
</comment>
<comment type="subcellular location">
    <subcellularLocation>
        <location evidence="1">Cell inner membrane</location>
        <topology evidence="1">Multi-pass membrane protein</topology>
    </subcellularLocation>
</comment>
<comment type="similarity">
    <text evidence="3">Belongs to the oxidase-dependent Fe transporter (OFeT) (TC 9.A.10.1) family.</text>
</comment>
<comment type="sequence caution" evidence="3">
    <conflict type="erroneous initiation">
        <sequence resource="EMBL-CDS" id="ABE06564"/>
    </conflict>
    <text>Extended N-terminus.</text>
</comment>
<proteinExistence type="inferred from homology"/>
<keyword id="KW-0997">Cell inner membrane</keyword>
<keyword id="KW-1003">Cell membrane</keyword>
<keyword id="KW-0406">Ion transport</keyword>
<keyword id="KW-0408">Iron</keyword>
<keyword id="KW-0410">Iron transport</keyword>
<keyword id="KW-0472">Membrane</keyword>
<keyword id="KW-0812">Transmembrane</keyword>
<keyword id="KW-1133">Transmembrane helix</keyword>
<keyword id="KW-0813">Transport</keyword>
<organism>
    <name type="scientific">Escherichia coli (strain UTI89 / UPEC)</name>
    <dbReference type="NCBI Taxonomy" id="364106"/>
    <lineage>
        <taxon>Bacteria</taxon>
        <taxon>Pseudomonadati</taxon>
        <taxon>Pseudomonadota</taxon>
        <taxon>Gammaproteobacteria</taxon>
        <taxon>Enterobacterales</taxon>
        <taxon>Enterobacteriaceae</taxon>
        <taxon>Escherichia</taxon>
    </lineage>
</organism>
<dbReference type="EMBL" id="CP000243">
    <property type="protein sequence ID" value="ABE06564.1"/>
    <property type="status" value="ALT_INIT"/>
    <property type="molecule type" value="Genomic_DNA"/>
</dbReference>
<dbReference type="RefSeq" id="WP_000497947.1">
    <property type="nucleotide sequence ID" value="NZ_CP064825.1"/>
</dbReference>
<dbReference type="SMR" id="Q1RDK0"/>
<dbReference type="KEGG" id="eci:UTI89_C1080"/>
<dbReference type="HOGENOM" id="CLU_077905_0_0_6"/>
<dbReference type="Proteomes" id="UP000001952">
    <property type="component" value="Chromosome"/>
</dbReference>
<dbReference type="GO" id="GO:0033573">
    <property type="term" value="C:high-affinity iron permease complex"/>
    <property type="evidence" value="ECO:0007669"/>
    <property type="project" value="InterPro"/>
</dbReference>
<dbReference type="GO" id="GO:0015093">
    <property type="term" value="F:ferrous iron transmembrane transporter activity"/>
    <property type="evidence" value="ECO:0007669"/>
    <property type="project" value="TreeGrafter"/>
</dbReference>
<dbReference type="InterPro" id="IPR005217">
    <property type="entry name" value="EfeU/FTR1-like"/>
</dbReference>
<dbReference type="InterPro" id="IPR004923">
    <property type="entry name" value="FTR1/Fip1/EfeU"/>
</dbReference>
<dbReference type="InterPro" id="IPR036259">
    <property type="entry name" value="MFS_trans_sf"/>
</dbReference>
<dbReference type="NCBIfam" id="NF041756">
    <property type="entry name" value="EfeU"/>
    <property type="match status" value="1"/>
</dbReference>
<dbReference type="NCBIfam" id="TIGR00145">
    <property type="entry name" value="EfeU/Ftr1 family ferrous iron transporter subunit"/>
    <property type="match status" value="1"/>
</dbReference>
<dbReference type="PANTHER" id="PTHR31632">
    <property type="entry name" value="IRON TRANSPORTER FTH1"/>
    <property type="match status" value="1"/>
</dbReference>
<dbReference type="PANTHER" id="PTHR31632:SF2">
    <property type="entry name" value="PLASMA MEMBRANE IRON PERMEASE"/>
    <property type="match status" value="1"/>
</dbReference>
<dbReference type="Pfam" id="PF03239">
    <property type="entry name" value="FTR1"/>
    <property type="match status" value="1"/>
</dbReference>
<dbReference type="SUPFAM" id="SSF103473">
    <property type="entry name" value="MFS general substrate transporter"/>
    <property type="match status" value="1"/>
</dbReference>
<evidence type="ECO:0000250" key="1"/>
<evidence type="ECO:0000255" key="2"/>
<evidence type="ECO:0000305" key="3"/>
<sequence>MFVPFLIMLREGLEAALIVSLIASYLKRTQRGRWIGVMWIGVLLAAALCLGLGIFINETTGEFPQKEQELFEGIVAVIAVVILTWMVFWMRKVSRNVKVQLEQAVDSALQRGNHHGWALVMMVFFAVAREGLESVFFLLAAFQQDVGIWPPLGAMLGLATAVVLGFLLYWGGIRLNLGAFFKWTSLFILFVAAGLAAGAIRAFHEAGLWNHFQEIAFDMSAVLSTHSLFGTLMEGIFGYQEAPSVSEVAVWFIYLIPALVAFVLPPRAGATASRSV</sequence>
<feature type="chain" id="PRO_0000277543" description="Ferrous iron permease EfeU">
    <location>
        <begin position="1"/>
        <end position="276"/>
    </location>
</feature>
<feature type="topological domain" description="Periplasmic" evidence="2">
    <location>
        <position position="1"/>
    </location>
</feature>
<feature type="transmembrane region" description="Helical" evidence="2">
    <location>
        <begin position="2"/>
        <end position="22"/>
    </location>
</feature>
<feature type="topological domain" description="Cytoplasmic" evidence="2">
    <location>
        <begin position="23"/>
        <end position="34"/>
    </location>
</feature>
<feature type="transmembrane region" description="Helical" evidence="2">
    <location>
        <begin position="35"/>
        <end position="55"/>
    </location>
</feature>
<feature type="topological domain" description="Periplasmic" evidence="2">
    <location>
        <begin position="56"/>
        <end position="69"/>
    </location>
</feature>
<feature type="transmembrane region" description="Helical" evidence="2">
    <location>
        <begin position="70"/>
        <end position="90"/>
    </location>
</feature>
<feature type="topological domain" description="Cytoplasmic" evidence="2">
    <location>
        <begin position="91"/>
        <end position="118"/>
    </location>
</feature>
<feature type="transmembrane region" description="Helical" evidence="2">
    <location>
        <begin position="119"/>
        <end position="139"/>
    </location>
</feature>
<feature type="topological domain" description="Periplasmic" evidence="2">
    <location>
        <begin position="140"/>
        <end position="147"/>
    </location>
</feature>
<feature type="transmembrane region" description="Helical" evidence="2">
    <location>
        <begin position="148"/>
        <end position="168"/>
    </location>
</feature>
<feature type="topological domain" description="Cytoplasmic" evidence="2">
    <location>
        <begin position="169"/>
        <end position="179"/>
    </location>
</feature>
<feature type="transmembrane region" description="Helical" evidence="2">
    <location>
        <begin position="180"/>
        <end position="200"/>
    </location>
</feature>
<feature type="topological domain" description="Periplasmic" evidence="2">
    <location>
        <begin position="201"/>
        <end position="244"/>
    </location>
</feature>
<feature type="transmembrane region" description="Helical" evidence="2">
    <location>
        <begin position="245"/>
        <end position="265"/>
    </location>
</feature>
<feature type="topological domain" description="Cytoplasmic" evidence="2">
    <location>
        <begin position="266"/>
        <end position="276"/>
    </location>
</feature>
<accession>Q1RDK0</accession>
<reference key="1">
    <citation type="journal article" date="2006" name="Proc. Natl. Acad. Sci. U.S.A.">
        <title>Identification of genes subject to positive selection in uropathogenic strains of Escherichia coli: a comparative genomics approach.</title>
        <authorList>
            <person name="Chen S.L."/>
            <person name="Hung C.-S."/>
            <person name="Xu J."/>
            <person name="Reigstad C.S."/>
            <person name="Magrini V."/>
            <person name="Sabo A."/>
            <person name="Blasiar D."/>
            <person name="Bieri T."/>
            <person name="Meyer R.R."/>
            <person name="Ozersky P."/>
            <person name="Armstrong J.R."/>
            <person name="Fulton R.S."/>
            <person name="Latreille J.P."/>
            <person name="Spieth J."/>
            <person name="Hooton T.M."/>
            <person name="Mardis E.R."/>
            <person name="Hultgren S.J."/>
            <person name="Gordon J.I."/>
        </authorList>
    </citation>
    <scope>NUCLEOTIDE SEQUENCE [LARGE SCALE GENOMIC DNA]</scope>
    <source>
        <strain>UTI89 / UPEC</strain>
    </source>
</reference>
<name>EFEU_ECOUT</name>
<protein>
    <recommendedName>
        <fullName>Ferrous iron permease EfeU</fullName>
    </recommendedName>
    <alternativeName>
        <fullName>Fe(2+) ion permease EfeU</fullName>
    </alternativeName>
    <alternativeName>
        <fullName>Ferrous iron uptake protein</fullName>
    </alternativeName>
</protein>
<gene>
    <name type="primary">efeU</name>
    <name type="ordered locus">UTI89_C1080</name>
</gene>